<reference key="1">
    <citation type="journal article" date="2006" name="BMC Evol. Biol.">
        <title>Complete plastid genome sequences of Drimys, Liriodendron, and Piper: implications for the phylogenetic relationships of magnoliids.</title>
        <authorList>
            <person name="Cai Z."/>
            <person name="Penaflor C."/>
            <person name="Kuehl J.V."/>
            <person name="Leebens-Mack J."/>
            <person name="Carlson J.E."/>
            <person name="dePamphilis C.W."/>
            <person name="Boore J.L."/>
            <person name="Jansen R.K."/>
        </authorList>
    </citation>
    <scope>NUCLEOTIDE SEQUENCE [LARGE SCALE GENOMIC DNA]</scope>
</reference>
<protein>
    <recommendedName>
        <fullName evidence="1">Small ribosomal subunit protein uS2c</fullName>
    </recommendedName>
    <alternativeName>
        <fullName>30S ribosomal protein S2, chloroplastic</fullName>
    </alternativeName>
</protein>
<gene>
    <name type="primary">rps2</name>
</gene>
<dbReference type="EMBL" id="DQ899947">
    <property type="protein sequence ID" value="ABI32498.1"/>
    <property type="molecule type" value="Genomic_DNA"/>
</dbReference>
<dbReference type="RefSeq" id="YP_740191.1">
    <property type="nucleotide sequence ID" value="NC_008326.1"/>
</dbReference>
<dbReference type="SMR" id="Q0G9N0"/>
<dbReference type="GeneID" id="4266599"/>
<dbReference type="GO" id="GO:0009507">
    <property type="term" value="C:chloroplast"/>
    <property type="evidence" value="ECO:0007669"/>
    <property type="project" value="UniProtKB-SubCell"/>
</dbReference>
<dbReference type="GO" id="GO:0005763">
    <property type="term" value="C:mitochondrial small ribosomal subunit"/>
    <property type="evidence" value="ECO:0007669"/>
    <property type="project" value="TreeGrafter"/>
</dbReference>
<dbReference type="GO" id="GO:0003735">
    <property type="term" value="F:structural constituent of ribosome"/>
    <property type="evidence" value="ECO:0007669"/>
    <property type="project" value="InterPro"/>
</dbReference>
<dbReference type="GO" id="GO:0006412">
    <property type="term" value="P:translation"/>
    <property type="evidence" value="ECO:0007669"/>
    <property type="project" value="UniProtKB-UniRule"/>
</dbReference>
<dbReference type="CDD" id="cd01425">
    <property type="entry name" value="RPS2"/>
    <property type="match status" value="1"/>
</dbReference>
<dbReference type="FunFam" id="3.40.50.10490:FF:000101">
    <property type="match status" value="1"/>
</dbReference>
<dbReference type="FunFam" id="1.10.287.610:FF:000001">
    <property type="entry name" value="30S ribosomal protein S2"/>
    <property type="match status" value="1"/>
</dbReference>
<dbReference type="Gene3D" id="3.40.50.10490">
    <property type="entry name" value="Glucose-6-phosphate isomerase like protein, domain 1"/>
    <property type="match status" value="1"/>
</dbReference>
<dbReference type="Gene3D" id="1.10.287.610">
    <property type="entry name" value="Helix hairpin bin"/>
    <property type="match status" value="1"/>
</dbReference>
<dbReference type="HAMAP" id="MF_00291_B">
    <property type="entry name" value="Ribosomal_uS2_B"/>
    <property type="match status" value="1"/>
</dbReference>
<dbReference type="InterPro" id="IPR001865">
    <property type="entry name" value="Ribosomal_uS2"/>
</dbReference>
<dbReference type="InterPro" id="IPR005706">
    <property type="entry name" value="Ribosomal_uS2_bac/mit/plastid"/>
</dbReference>
<dbReference type="InterPro" id="IPR018130">
    <property type="entry name" value="Ribosomal_uS2_CS"/>
</dbReference>
<dbReference type="InterPro" id="IPR023591">
    <property type="entry name" value="Ribosomal_uS2_flav_dom_sf"/>
</dbReference>
<dbReference type="NCBIfam" id="TIGR01011">
    <property type="entry name" value="rpsB_bact"/>
    <property type="match status" value="1"/>
</dbReference>
<dbReference type="PANTHER" id="PTHR12534">
    <property type="entry name" value="30S RIBOSOMAL PROTEIN S2 PROKARYOTIC AND ORGANELLAR"/>
    <property type="match status" value="1"/>
</dbReference>
<dbReference type="PANTHER" id="PTHR12534:SF0">
    <property type="entry name" value="SMALL RIBOSOMAL SUBUNIT PROTEIN US2M"/>
    <property type="match status" value="1"/>
</dbReference>
<dbReference type="Pfam" id="PF00318">
    <property type="entry name" value="Ribosomal_S2"/>
    <property type="match status" value="1"/>
</dbReference>
<dbReference type="PRINTS" id="PR00395">
    <property type="entry name" value="RIBOSOMALS2"/>
</dbReference>
<dbReference type="SUPFAM" id="SSF52313">
    <property type="entry name" value="Ribosomal protein S2"/>
    <property type="match status" value="1"/>
</dbReference>
<dbReference type="PROSITE" id="PS00962">
    <property type="entry name" value="RIBOSOMAL_S2_1"/>
    <property type="match status" value="1"/>
</dbReference>
<dbReference type="PROSITE" id="PS00963">
    <property type="entry name" value="RIBOSOMAL_S2_2"/>
    <property type="match status" value="1"/>
</dbReference>
<organism>
    <name type="scientific">Liriodendron tulipifera</name>
    <name type="common">Tuliptree</name>
    <name type="synonym">Tulip poplar</name>
    <dbReference type="NCBI Taxonomy" id="3415"/>
    <lineage>
        <taxon>Eukaryota</taxon>
        <taxon>Viridiplantae</taxon>
        <taxon>Streptophyta</taxon>
        <taxon>Embryophyta</taxon>
        <taxon>Tracheophyta</taxon>
        <taxon>Spermatophyta</taxon>
        <taxon>Magnoliopsida</taxon>
        <taxon>Magnoliidae</taxon>
        <taxon>Magnoliales</taxon>
        <taxon>Magnoliaceae</taxon>
        <taxon>Liriodendron</taxon>
    </lineage>
</organism>
<feature type="chain" id="PRO_0000352128" description="Small ribosomal subunit protein uS2c">
    <location>
        <begin position="1"/>
        <end position="236"/>
    </location>
</feature>
<geneLocation type="chloroplast"/>
<comment type="subcellular location">
    <subcellularLocation>
        <location>Plastid</location>
        <location>Chloroplast</location>
    </subcellularLocation>
</comment>
<comment type="similarity">
    <text evidence="1">Belongs to the universal ribosomal protein uS2 family.</text>
</comment>
<evidence type="ECO:0000305" key="1"/>
<sequence length="236" mass="26640">MTRRYWNIHLEEMMEAGVHFGHGTRKWNPRMAPYISAKRKGIHITNLTRTARFLSEACDLVFDAASRGKNFLLVGTKNKAADSVASAAIRARCHYVNKKWLGGMLTNWSTTETRLHKFRDLRAEQKTGKLNRLPKRDAAMLKRQLSHLQTYLGGIKYMTGLPDIVIIVDQQEEYTALRECLTLGIPTICLIDTNCDPDLADISIPANDDAIASIRLILNKLVSAICEGRSSSIRNR</sequence>
<accession>Q0G9N0</accession>
<proteinExistence type="inferred from homology"/>
<name>RR2_LIRTU</name>
<keyword id="KW-0150">Chloroplast</keyword>
<keyword id="KW-0934">Plastid</keyword>
<keyword id="KW-0687">Ribonucleoprotein</keyword>
<keyword id="KW-0689">Ribosomal protein</keyword>